<protein>
    <recommendedName>
        <fullName evidence="1">Holliday junction branch migration complex subunit RuvB</fullName>
        <ecNumber evidence="1">3.6.4.-</ecNumber>
    </recommendedName>
</protein>
<gene>
    <name evidence="1" type="primary">ruvB</name>
    <name type="ordered locus">sync_0124</name>
</gene>
<keyword id="KW-0067">ATP-binding</keyword>
<keyword id="KW-0963">Cytoplasm</keyword>
<keyword id="KW-0227">DNA damage</keyword>
<keyword id="KW-0233">DNA recombination</keyword>
<keyword id="KW-0234">DNA repair</keyword>
<keyword id="KW-0238">DNA-binding</keyword>
<keyword id="KW-0378">Hydrolase</keyword>
<keyword id="KW-0547">Nucleotide-binding</keyword>
<keyword id="KW-1185">Reference proteome</keyword>
<dbReference type="EC" id="3.6.4.-" evidence="1"/>
<dbReference type="EMBL" id="CP000435">
    <property type="protein sequence ID" value="ABI46432.1"/>
    <property type="molecule type" value="Genomic_DNA"/>
</dbReference>
<dbReference type="RefSeq" id="WP_011618110.1">
    <property type="nucleotide sequence ID" value="NC_008319.1"/>
</dbReference>
<dbReference type="SMR" id="Q0IDW1"/>
<dbReference type="STRING" id="64471.sync_0124"/>
<dbReference type="KEGG" id="syg:sync_0124"/>
<dbReference type="eggNOG" id="COG2255">
    <property type="taxonomic scope" value="Bacteria"/>
</dbReference>
<dbReference type="HOGENOM" id="CLU_055599_1_0_3"/>
<dbReference type="OrthoDB" id="9804478at2"/>
<dbReference type="Proteomes" id="UP000001961">
    <property type="component" value="Chromosome"/>
</dbReference>
<dbReference type="GO" id="GO:0005737">
    <property type="term" value="C:cytoplasm"/>
    <property type="evidence" value="ECO:0007669"/>
    <property type="project" value="UniProtKB-SubCell"/>
</dbReference>
<dbReference type="GO" id="GO:0048476">
    <property type="term" value="C:Holliday junction resolvase complex"/>
    <property type="evidence" value="ECO:0007669"/>
    <property type="project" value="UniProtKB-UniRule"/>
</dbReference>
<dbReference type="GO" id="GO:0005524">
    <property type="term" value="F:ATP binding"/>
    <property type="evidence" value="ECO:0007669"/>
    <property type="project" value="UniProtKB-UniRule"/>
</dbReference>
<dbReference type="GO" id="GO:0016887">
    <property type="term" value="F:ATP hydrolysis activity"/>
    <property type="evidence" value="ECO:0007669"/>
    <property type="project" value="InterPro"/>
</dbReference>
<dbReference type="GO" id="GO:0000400">
    <property type="term" value="F:four-way junction DNA binding"/>
    <property type="evidence" value="ECO:0007669"/>
    <property type="project" value="UniProtKB-UniRule"/>
</dbReference>
<dbReference type="GO" id="GO:0009378">
    <property type="term" value="F:four-way junction helicase activity"/>
    <property type="evidence" value="ECO:0007669"/>
    <property type="project" value="InterPro"/>
</dbReference>
<dbReference type="GO" id="GO:0006310">
    <property type="term" value="P:DNA recombination"/>
    <property type="evidence" value="ECO:0007669"/>
    <property type="project" value="UniProtKB-UniRule"/>
</dbReference>
<dbReference type="GO" id="GO:0006281">
    <property type="term" value="P:DNA repair"/>
    <property type="evidence" value="ECO:0007669"/>
    <property type="project" value="UniProtKB-UniRule"/>
</dbReference>
<dbReference type="CDD" id="cd00009">
    <property type="entry name" value="AAA"/>
    <property type="match status" value="1"/>
</dbReference>
<dbReference type="Gene3D" id="1.10.8.60">
    <property type="match status" value="1"/>
</dbReference>
<dbReference type="Gene3D" id="3.40.50.300">
    <property type="entry name" value="P-loop containing nucleotide triphosphate hydrolases"/>
    <property type="match status" value="1"/>
</dbReference>
<dbReference type="Gene3D" id="1.10.10.10">
    <property type="entry name" value="Winged helix-like DNA-binding domain superfamily/Winged helix DNA-binding domain"/>
    <property type="match status" value="1"/>
</dbReference>
<dbReference type="HAMAP" id="MF_00016">
    <property type="entry name" value="DNA_HJ_migration_RuvB"/>
    <property type="match status" value="1"/>
</dbReference>
<dbReference type="InterPro" id="IPR003593">
    <property type="entry name" value="AAA+_ATPase"/>
</dbReference>
<dbReference type="InterPro" id="IPR041445">
    <property type="entry name" value="AAA_lid_4"/>
</dbReference>
<dbReference type="InterPro" id="IPR004605">
    <property type="entry name" value="DNA_helicase_Holl-junc_RuvB"/>
</dbReference>
<dbReference type="InterPro" id="IPR027417">
    <property type="entry name" value="P-loop_NTPase"/>
</dbReference>
<dbReference type="InterPro" id="IPR008824">
    <property type="entry name" value="RuvB-like_N"/>
</dbReference>
<dbReference type="InterPro" id="IPR008823">
    <property type="entry name" value="RuvB_C"/>
</dbReference>
<dbReference type="InterPro" id="IPR036388">
    <property type="entry name" value="WH-like_DNA-bd_sf"/>
</dbReference>
<dbReference type="InterPro" id="IPR036390">
    <property type="entry name" value="WH_DNA-bd_sf"/>
</dbReference>
<dbReference type="NCBIfam" id="NF000868">
    <property type="entry name" value="PRK00080.1"/>
    <property type="match status" value="1"/>
</dbReference>
<dbReference type="NCBIfam" id="TIGR00635">
    <property type="entry name" value="ruvB"/>
    <property type="match status" value="1"/>
</dbReference>
<dbReference type="PANTHER" id="PTHR42848">
    <property type="match status" value="1"/>
</dbReference>
<dbReference type="PANTHER" id="PTHR42848:SF1">
    <property type="entry name" value="HOLLIDAY JUNCTION BRANCH MIGRATION COMPLEX SUBUNIT RUVB"/>
    <property type="match status" value="1"/>
</dbReference>
<dbReference type="Pfam" id="PF17864">
    <property type="entry name" value="AAA_lid_4"/>
    <property type="match status" value="1"/>
</dbReference>
<dbReference type="Pfam" id="PF05491">
    <property type="entry name" value="RuvB_C"/>
    <property type="match status" value="1"/>
</dbReference>
<dbReference type="Pfam" id="PF05496">
    <property type="entry name" value="RuvB_N"/>
    <property type="match status" value="1"/>
</dbReference>
<dbReference type="SMART" id="SM00382">
    <property type="entry name" value="AAA"/>
    <property type="match status" value="1"/>
</dbReference>
<dbReference type="SUPFAM" id="SSF52540">
    <property type="entry name" value="P-loop containing nucleoside triphosphate hydrolases"/>
    <property type="match status" value="1"/>
</dbReference>
<dbReference type="SUPFAM" id="SSF46785">
    <property type="entry name" value="Winged helix' DNA-binding domain"/>
    <property type="match status" value="1"/>
</dbReference>
<sequence length="359" mass="38825">MAIVSSNAEPSKGAPRPKPSRVVDAARQLDDSAELSATKEDGLRPRRLDDYIGQRELKQVLGIAIQAAMGRGEALDHVLLYGPPGLGKTTMAMVLAEELGVTCRITSAPALERPRDIVGLLVNLQPKEVLFIDEIHRLTRVAEELLYPAMEDRRLDLTVGKGSTARTRALELPPFTLVGATTRAGALSSPLRDRFGLIQRLEFYGQEDLQAIVMRAAGLLTLQLSPEACAEIARRCRGTPRIANRLLRRVRDVACVREVSGCIDVKLVDEALTLHRVDGKGLDASDRRLLELLLQSHGGGPVGLDTLAAALGEDPTTLEAVVEPYLLQLGFLQRTPRGRVVTAAGRGHLGWPADEGDAA</sequence>
<evidence type="ECO:0000255" key="1">
    <source>
        <dbReference type="HAMAP-Rule" id="MF_00016"/>
    </source>
</evidence>
<evidence type="ECO:0000256" key="2">
    <source>
        <dbReference type="SAM" id="MobiDB-lite"/>
    </source>
</evidence>
<feature type="chain" id="PRO_1000001493" description="Holliday junction branch migration complex subunit RuvB">
    <location>
        <begin position="1"/>
        <end position="359"/>
    </location>
</feature>
<feature type="region of interest" description="Disordered" evidence="2">
    <location>
        <begin position="1"/>
        <end position="22"/>
    </location>
</feature>
<feature type="region of interest" description="Large ATPase domain (RuvB-L)" evidence="1">
    <location>
        <begin position="13"/>
        <end position="204"/>
    </location>
</feature>
<feature type="region of interest" description="Small ATPAse domain (RuvB-S)" evidence="1">
    <location>
        <begin position="205"/>
        <end position="276"/>
    </location>
</feature>
<feature type="region of interest" description="Head domain (RuvB-H)" evidence="1">
    <location>
        <begin position="279"/>
        <end position="359"/>
    </location>
</feature>
<feature type="binding site" evidence="1">
    <location>
        <position position="43"/>
    </location>
    <ligand>
        <name>ATP</name>
        <dbReference type="ChEBI" id="CHEBI:30616"/>
    </ligand>
</feature>
<feature type="binding site" evidence="1">
    <location>
        <position position="44"/>
    </location>
    <ligand>
        <name>ATP</name>
        <dbReference type="ChEBI" id="CHEBI:30616"/>
    </ligand>
</feature>
<feature type="binding site" evidence="1">
    <location>
        <position position="85"/>
    </location>
    <ligand>
        <name>ATP</name>
        <dbReference type="ChEBI" id="CHEBI:30616"/>
    </ligand>
</feature>
<feature type="binding site" evidence="1">
    <location>
        <position position="88"/>
    </location>
    <ligand>
        <name>ATP</name>
        <dbReference type="ChEBI" id="CHEBI:30616"/>
    </ligand>
</feature>
<feature type="binding site" evidence="1">
    <location>
        <position position="89"/>
    </location>
    <ligand>
        <name>ATP</name>
        <dbReference type="ChEBI" id="CHEBI:30616"/>
    </ligand>
</feature>
<feature type="binding site" evidence="1">
    <location>
        <position position="89"/>
    </location>
    <ligand>
        <name>Mg(2+)</name>
        <dbReference type="ChEBI" id="CHEBI:18420"/>
    </ligand>
</feature>
<feature type="binding site" evidence="1">
    <location>
        <position position="90"/>
    </location>
    <ligand>
        <name>ATP</name>
        <dbReference type="ChEBI" id="CHEBI:30616"/>
    </ligand>
</feature>
<feature type="binding site" evidence="1">
    <location>
        <position position="194"/>
    </location>
    <ligand>
        <name>ATP</name>
        <dbReference type="ChEBI" id="CHEBI:30616"/>
    </ligand>
</feature>
<feature type="binding site" evidence="1">
    <location>
        <position position="204"/>
    </location>
    <ligand>
        <name>ATP</name>
        <dbReference type="ChEBI" id="CHEBI:30616"/>
    </ligand>
</feature>
<feature type="binding site" evidence="1">
    <location>
        <position position="241"/>
    </location>
    <ligand>
        <name>ATP</name>
        <dbReference type="ChEBI" id="CHEBI:30616"/>
    </ligand>
</feature>
<feature type="binding site" evidence="1">
    <location>
        <position position="334"/>
    </location>
    <ligand>
        <name>DNA</name>
        <dbReference type="ChEBI" id="CHEBI:16991"/>
    </ligand>
</feature>
<feature type="binding site" evidence="1">
    <location>
        <position position="339"/>
    </location>
    <ligand>
        <name>DNA</name>
        <dbReference type="ChEBI" id="CHEBI:16991"/>
    </ligand>
</feature>
<reference key="1">
    <citation type="journal article" date="2006" name="Proc. Natl. Acad. Sci. U.S.A.">
        <title>Genome sequence of Synechococcus CC9311: insights into adaptation to a coastal environment.</title>
        <authorList>
            <person name="Palenik B."/>
            <person name="Ren Q."/>
            <person name="Dupont C.L."/>
            <person name="Myers G.S."/>
            <person name="Heidelberg J.F."/>
            <person name="Badger J.H."/>
            <person name="Madupu R."/>
            <person name="Nelson W.C."/>
            <person name="Brinkac L.M."/>
            <person name="Dodson R.J."/>
            <person name="Durkin A.S."/>
            <person name="Daugherty S.C."/>
            <person name="Sullivan S.A."/>
            <person name="Khouri H."/>
            <person name="Mohamoud Y."/>
            <person name="Halpin R."/>
            <person name="Paulsen I.T."/>
        </authorList>
    </citation>
    <scope>NUCLEOTIDE SEQUENCE [LARGE SCALE GENOMIC DNA]</scope>
    <source>
        <strain>CC9311</strain>
    </source>
</reference>
<comment type="function">
    <text evidence="1">The RuvA-RuvB-RuvC complex processes Holliday junction (HJ) DNA during genetic recombination and DNA repair, while the RuvA-RuvB complex plays an important role in the rescue of blocked DNA replication forks via replication fork reversal (RFR). RuvA specifically binds to HJ cruciform DNA, conferring on it an open structure. The RuvB hexamer acts as an ATP-dependent pump, pulling dsDNA into and through the RuvAB complex. RuvB forms 2 homohexamers on either side of HJ DNA bound by 1 or 2 RuvA tetramers; 4 subunits per hexamer contact DNA at a time. Coordinated motions by a converter formed by DNA-disengaged RuvB subunits stimulates ATP hydrolysis and nucleotide exchange. Immobilization of the converter enables RuvB to convert the ATP-contained energy into a lever motion, pulling 2 nucleotides of DNA out of the RuvA tetramer per ATP hydrolyzed, thus driving DNA branch migration. The RuvB motors rotate together with the DNA substrate, which together with the progressing nucleotide cycle form the mechanistic basis for DNA recombination by continuous HJ branch migration. Branch migration allows RuvC to scan DNA until it finds its consensus sequence, where it cleaves and resolves cruciform DNA.</text>
</comment>
<comment type="catalytic activity">
    <reaction evidence="1">
        <text>ATP + H2O = ADP + phosphate + H(+)</text>
        <dbReference type="Rhea" id="RHEA:13065"/>
        <dbReference type="ChEBI" id="CHEBI:15377"/>
        <dbReference type="ChEBI" id="CHEBI:15378"/>
        <dbReference type="ChEBI" id="CHEBI:30616"/>
        <dbReference type="ChEBI" id="CHEBI:43474"/>
        <dbReference type="ChEBI" id="CHEBI:456216"/>
    </reaction>
</comment>
<comment type="subunit">
    <text evidence="1">Homohexamer. Forms an RuvA(8)-RuvB(12)-Holliday junction (HJ) complex. HJ DNA is sandwiched between 2 RuvA tetramers; dsDNA enters through RuvA and exits via RuvB. An RuvB hexamer assembles on each DNA strand where it exits the tetramer. Each RuvB hexamer is contacted by two RuvA subunits (via domain III) on 2 adjacent RuvB subunits; this complex drives branch migration. In the full resolvosome a probable DNA-RuvA(4)-RuvB(12)-RuvC(2) complex forms which resolves the HJ.</text>
</comment>
<comment type="subcellular location">
    <subcellularLocation>
        <location evidence="1">Cytoplasm</location>
    </subcellularLocation>
</comment>
<comment type="domain">
    <text evidence="1">Has 3 domains, the large (RuvB-L) and small ATPase (RuvB-S) domains and the C-terminal head (RuvB-H) domain. The head domain binds DNA, while the ATPase domains jointly bind ATP, ADP or are empty depending on the state of the subunit in the translocation cycle. During a single DNA translocation step the structure of each domain remains the same, but their relative positions change.</text>
</comment>
<comment type="similarity">
    <text evidence="1">Belongs to the RuvB family.</text>
</comment>
<name>RUVB_SYNS3</name>
<proteinExistence type="inferred from homology"/>
<accession>Q0IDW1</accession>
<organism>
    <name type="scientific">Synechococcus sp. (strain CC9311)</name>
    <dbReference type="NCBI Taxonomy" id="64471"/>
    <lineage>
        <taxon>Bacteria</taxon>
        <taxon>Bacillati</taxon>
        <taxon>Cyanobacteriota</taxon>
        <taxon>Cyanophyceae</taxon>
        <taxon>Synechococcales</taxon>
        <taxon>Synechococcaceae</taxon>
        <taxon>Synechococcus</taxon>
    </lineage>
</organism>